<feature type="chain" id="PRO_1000146213" description="D-aminoacyl-tRNA deacylase">
    <location>
        <begin position="1"/>
        <end position="147"/>
    </location>
</feature>
<feature type="short sequence motif" description="Gly-cisPro motif, important for rejection of L-amino acids" evidence="1">
    <location>
        <begin position="136"/>
        <end position="137"/>
    </location>
</feature>
<name>DTD_STRP7</name>
<evidence type="ECO:0000255" key="1">
    <source>
        <dbReference type="HAMAP-Rule" id="MF_00518"/>
    </source>
</evidence>
<dbReference type="EC" id="3.1.1.96" evidence="1"/>
<dbReference type="EMBL" id="CP000918">
    <property type="protein sequence ID" value="ACO16070.1"/>
    <property type="molecule type" value="Genomic_DNA"/>
</dbReference>
<dbReference type="RefSeq" id="WP_000691400.1">
    <property type="nucleotide sequence ID" value="NC_012468.1"/>
</dbReference>
<dbReference type="SMR" id="C1C8N4"/>
<dbReference type="GeneID" id="45653142"/>
<dbReference type="KEGG" id="snm:SP70585_1685"/>
<dbReference type="HOGENOM" id="CLU_076901_1_0_9"/>
<dbReference type="Proteomes" id="UP000002211">
    <property type="component" value="Chromosome"/>
</dbReference>
<dbReference type="GO" id="GO:0005737">
    <property type="term" value="C:cytoplasm"/>
    <property type="evidence" value="ECO:0007669"/>
    <property type="project" value="UniProtKB-SubCell"/>
</dbReference>
<dbReference type="GO" id="GO:0051500">
    <property type="term" value="F:D-tyrosyl-tRNA(Tyr) deacylase activity"/>
    <property type="evidence" value="ECO:0007669"/>
    <property type="project" value="TreeGrafter"/>
</dbReference>
<dbReference type="GO" id="GO:0106026">
    <property type="term" value="F:Gly-tRNA(Ala) deacylase activity"/>
    <property type="evidence" value="ECO:0007669"/>
    <property type="project" value="UniProtKB-UniRule"/>
</dbReference>
<dbReference type="GO" id="GO:0043908">
    <property type="term" value="F:Ser(Gly)-tRNA(Ala) hydrolase activity"/>
    <property type="evidence" value="ECO:0007669"/>
    <property type="project" value="UniProtKB-UniRule"/>
</dbReference>
<dbReference type="GO" id="GO:0000049">
    <property type="term" value="F:tRNA binding"/>
    <property type="evidence" value="ECO:0007669"/>
    <property type="project" value="UniProtKB-UniRule"/>
</dbReference>
<dbReference type="GO" id="GO:0019478">
    <property type="term" value="P:D-amino acid catabolic process"/>
    <property type="evidence" value="ECO:0007669"/>
    <property type="project" value="UniProtKB-UniRule"/>
</dbReference>
<dbReference type="CDD" id="cd00563">
    <property type="entry name" value="Dtyr_deacylase"/>
    <property type="match status" value="1"/>
</dbReference>
<dbReference type="FunFam" id="3.50.80.10:FF:000001">
    <property type="entry name" value="D-aminoacyl-tRNA deacylase"/>
    <property type="match status" value="1"/>
</dbReference>
<dbReference type="Gene3D" id="3.50.80.10">
    <property type="entry name" value="D-tyrosyl-tRNA(Tyr) deacylase"/>
    <property type="match status" value="1"/>
</dbReference>
<dbReference type="HAMAP" id="MF_00518">
    <property type="entry name" value="Deacylase_Dtd"/>
    <property type="match status" value="1"/>
</dbReference>
<dbReference type="InterPro" id="IPR003732">
    <property type="entry name" value="Daa-tRNA_deacyls_DTD"/>
</dbReference>
<dbReference type="InterPro" id="IPR023509">
    <property type="entry name" value="DTD-like_sf"/>
</dbReference>
<dbReference type="NCBIfam" id="TIGR00256">
    <property type="entry name" value="D-aminoacyl-tRNA deacylase"/>
    <property type="match status" value="1"/>
</dbReference>
<dbReference type="PANTHER" id="PTHR10472:SF5">
    <property type="entry name" value="D-AMINOACYL-TRNA DEACYLASE 1"/>
    <property type="match status" value="1"/>
</dbReference>
<dbReference type="PANTHER" id="PTHR10472">
    <property type="entry name" value="D-TYROSYL-TRNA TYR DEACYLASE"/>
    <property type="match status" value="1"/>
</dbReference>
<dbReference type="Pfam" id="PF02580">
    <property type="entry name" value="Tyr_Deacylase"/>
    <property type="match status" value="1"/>
</dbReference>
<dbReference type="SUPFAM" id="SSF69500">
    <property type="entry name" value="DTD-like"/>
    <property type="match status" value="1"/>
</dbReference>
<proteinExistence type="inferred from homology"/>
<sequence>MKIIIQRVKKAQVSIEGQIQGKINQGLLLLVGVGPEDQEEDLDYAVRKLVNMRIFSDAEGKMNLSVKDIEGEILSISQFTLFADTKKGNRPAFTGAAKPDMASDFYDAFNQKLAQEVPVQTGIFGADMQVELVNNGPVTIILDTKKR</sequence>
<keyword id="KW-0963">Cytoplasm</keyword>
<keyword id="KW-0378">Hydrolase</keyword>
<keyword id="KW-0694">RNA-binding</keyword>
<keyword id="KW-0820">tRNA-binding</keyword>
<comment type="function">
    <text evidence="1">An aminoacyl-tRNA editing enzyme that deacylates mischarged D-aminoacyl-tRNAs. Also deacylates mischarged glycyl-tRNA(Ala), protecting cells against glycine mischarging by AlaRS. Acts via tRNA-based rather than protein-based catalysis; rejects L-amino acids rather than detecting D-amino acids in the active site. By recycling D-aminoacyl-tRNA to D-amino acids and free tRNA molecules, this enzyme counteracts the toxicity associated with the formation of D-aminoacyl-tRNA entities in vivo and helps enforce protein L-homochirality.</text>
</comment>
<comment type="catalytic activity">
    <reaction evidence="1">
        <text>glycyl-tRNA(Ala) + H2O = tRNA(Ala) + glycine + H(+)</text>
        <dbReference type="Rhea" id="RHEA:53744"/>
        <dbReference type="Rhea" id="RHEA-COMP:9657"/>
        <dbReference type="Rhea" id="RHEA-COMP:13640"/>
        <dbReference type="ChEBI" id="CHEBI:15377"/>
        <dbReference type="ChEBI" id="CHEBI:15378"/>
        <dbReference type="ChEBI" id="CHEBI:57305"/>
        <dbReference type="ChEBI" id="CHEBI:78442"/>
        <dbReference type="ChEBI" id="CHEBI:78522"/>
        <dbReference type="EC" id="3.1.1.96"/>
    </reaction>
</comment>
<comment type="catalytic activity">
    <reaction evidence="1">
        <text>a D-aminoacyl-tRNA + H2O = a tRNA + a D-alpha-amino acid + H(+)</text>
        <dbReference type="Rhea" id="RHEA:13953"/>
        <dbReference type="Rhea" id="RHEA-COMP:10123"/>
        <dbReference type="Rhea" id="RHEA-COMP:10124"/>
        <dbReference type="ChEBI" id="CHEBI:15377"/>
        <dbReference type="ChEBI" id="CHEBI:15378"/>
        <dbReference type="ChEBI" id="CHEBI:59871"/>
        <dbReference type="ChEBI" id="CHEBI:78442"/>
        <dbReference type="ChEBI" id="CHEBI:79333"/>
        <dbReference type="EC" id="3.1.1.96"/>
    </reaction>
</comment>
<comment type="subunit">
    <text evidence="1">Homodimer.</text>
</comment>
<comment type="subcellular location">
    <subcellularLocation>
        <location evidence="1">Cytoplasm</location>
    </subcellularLocation>
</comment>
<comment type="domain">
    <text evidence="1">A Gly-cisPro motif from one monomer fits into the active site of the other monomer to allow specific chiral rejection of L-amino acids.</text>
</comment>
<comment type="similarity">
    <text evidence="1">Belongs to the DTD family.</text>
</comment>
<accession>C1C8N4</accession>
<protein>
    <recommendedName>
        <fullName evidence="1">D-aminoacyl-tRNA deacylase</fullName>
        <shortName evidence="1">DTD</shortName>
        <ecNumber evidence="1">3.1.1.96</ecNumber>
    </recommendedName>
    <alternativeName>
        <fullName evidence="1">Gly-tRNA(Ala) deacylase</fullName>
    </alternativeName>
</protein>
<gene>
    <name evidence="1" type="primary">dtd</name>
    <name type="ordered locus">SP70585_1685</name>
</gene>
<organism>
    <name type="scientific">Streptococcus pneumoniae (strain 70585)</name>
    <dbReference type="NCBI Taxonomy" id="488221"/>
    <lineage>
        <taxon>Bacteria</taxon>
        <taxon>Bacillati</taxon>
        <taxon>Bacillota</taxon>
        <taxon>Bacilli</taxon>
        <taxon>Lactobacillales</taxon>
        <taxon>Streptococcaceae</taxon>
        <taxon>Streptococcus</taxon>
    </lineage>
</organism>
<reference key="1">
    <citation type="journal article" date="2010" name="Genome Biol.">
        <title>Structure and dynamics of the pan-genome of Streptococcus pneumoniae and closely related species.</title>
        <authorList>
            <person name="Donati C."/>
            <person name="Hiller N.L."/>
            <person name="Tettelin H."/>
            <person name="Muzzi A."/>
            <person name="Croucher N.J."/>
            <person name="Angiuoli S.V."/>
            <person name="Oggioni M."/>
            <person name="Dunning Hotopp J.C."/>
            <person name="Hu F.Z."/>
            <person name="Riley D.R."/>
            <person name="Covacci A."/>
            <person name="Mitchell T.J."/>
            <person name="Bentley S.D."/>
            <person name="Kilian M."/>
            <person name="Ehrlich G.D."/>
            <person name="Rappuoli R."/>
            <person name="Moxon E.R."/>
            <person name="Masignani V."/>
        </authorList>
    </citation>
    <scope>NUCLEOTIDE SEQUENCE [LARGE SCALE GENOMIC DNA]</scope>
    <source>
        <strain>70585</strain>
    </source>
</reference>